<feature type="chain" id="PRO_0000176977" description="Transcription elongation factor GreA">
    <location>
        <begin position="1"/>
        <end position="158"/>
    </location>
</feature>
<feature type="coiled-coil region" evidence="1">
    <location>
        <begin position="2"/>
        <end position="70"/>
    </location>
</feature>
<protein>
    <recommendedName>
        <fullName evidence="1">Transcription elongation factor GreA</fullName>
    </recommendedName>
    <alternativeName>
        <fullName evidence="1">Transcript cleavage factor GreA</fullName>
    </alternativeName>
</protein>
<sequence>MENQKQYPMTQEGYEKLEQELEELKTVKRPEVVEKIKVARSFGDLSENSEYDAAKDEQGFIEQDIQRIEHMIRNALIIEDNGDNNVVQIGKTVTFIELPGDEEESYQIVGSAEADAFKGKISNESPMAKALIGKGLNDQVRVPLPNGGEMNVKIVEIK</sequence>
<accession>Q5HNU0</accession>
<reference key="1">
    <citation type="journal article" date="2005" name="J. Bacteriol.">
        <title>Insights on evolution of virulence and resistance from the complete genome analysis of an early methicillin-resistant Staphylococcus aureus strain and a biofilm-producing methicillin-resistant Staphylococcus epidermidis strain.</title>
        <authorList>
            <person name="Gill S.R."/>
            <person name="Fouts D.E."/>
            <person name="Archer G.L."/>
            <person name="Mongodin E.F."/>
            <person name="DeBoy R.T."/>
            <person name="Ravel J."/>
            <person name="Paulsen I.T."/>
            <person name="Kolonay J.F."/>
            <person name="Brinkac L.M."/>
            <person name="Beanan M.J."/>
            <person name="Dodson R.J."/>
            <person name="Daugherty S.C."/>
            <person name="Madupu R."/>
            <person name="Angiuoli S.V."/>
            <person name="Durkin A.S."/>
            <person name="Haft D.H."/>
            <person name="Vamathevan J.J."/>
            <person name="Khouri H."/>
            <person name="Utterback T.R."/>
            <person name="Lee C."/>
            <person name="Dimitrov G."/>
            <person name="Jiang L."/>
            <person name="Qin H."/>
            <person name="Weidman J."/>
            <person name="Tran K."/>
            <person name="Kang K.H."/>
            <person name="Hance I.R."/>
            <person name="Nelson K.E."/>
            <person name="Fraser C.M."/>
        </authorList>
    </citation>
    <scope>NUCLEOTIDE SEQUENCE [LARGE SCALE GENOMIC DNA]</scope>
    <source>
        <strain>ATCC 35984 / DSM 28319 / BCRC 17069 / CCUG 31568 / BM 3577 / RP62A</strain>
    </source>
</reference>
<keyword id="KW-0175">Coiled coil</keyword>
<keyword id="KW-0238">DNA-binding</keyword>
<keyword id="KW-1185">Reference proteome</keyword>
<keyword id="KW-0804">Transcription</keyword>
<keyword id="KW-0805">Transcription regulation</keyword>
<dbReference type="EMBL" id="CP000029">
    <property type="protein sequence ID" value="AAW54531.1"/>
    <property type="molecule type" value="Genomic_DNA"/>
</dbReference>
<dbReference type="RefSeq" id="WP_001830881.1">
    <property type="nucleotide sequence ID" value="NC_002976.3"/>
</dbReference>
<dbReference type="SMR" id="Q5HNU0"/>
<dbReference type="STRING" id="176279.SERP1174"/>
<dbReference type="GeneID" id="50018591"/>
<dbReference type="KEGG" id="ser:SERP1174"/>
<dbReference type="eggNOG" id="COG0782">
    <property type="taxonomic scope" value="Bacteria"/>
</dbReference>
<dbReference type="HOGENOM" id="CLU_101379_2_1_9"/>
<dbReference type="Proteomes" id="UP000000531">
    <property type="component" value="Chromosome"/>
</dbReference>
<dbReference type="GO" id="GO:0003677">
    <property type="term" value="F:DNA binding"/>
    <property type="evidence" value="ECO:0007669"/>
    <property type="project" value="UniProtKB-UniRule"/>
</dbReference>
<dbReference type="GO" id="GO:0070063">
    <property type="term" value="F:RNA polymerase binding"/>
    <property type="evidence" value="ECO:0007669"/>
    <property type="project" value="InterPro"/>
</dbReference>
<dbReference type="GO" id="GO:0006354">
    <property type="term" value="P:DNA-templated transcription elongation"/>
    <property type="evidence" value="ECO:0007669"/>
    <property type="project" value="TreeGrafter"/>
</dbReference>
<dbReference type="GO" id="GO:0032784">
    <property type="term" value="P:regulation of DNA-templated transcription elongation"/>
    <property type="evidence" value="ECO:0007669"/>
    <property type="project" value="UniProtKB-UniRule"/>
</dbReference>
<dbReference type="FunFam" id="1.10.287.180:FF:000001">
    <property type="entry name" value="Transcription elongation factor GreA"/>
    <property type="match status" value="1"/>
</dbReference>
<dbReference type="FunFam" id="3.10.50.30:FF:000001">
    <property type="entry name" value="Transcription elongation factor GreA"/>
    <property type="match status" value="1"/>
</dbReference>
<dbReference type="Gene3D" id="3.10.50.30">
    <property type="entry name" value="Transcription elongation factor, GreA/GreB, C-terminal domain"/>
    <property type="match status" value="1"/>
</dbReference>
<dbReference type="Gene3D" id="1.10.287.180">
    <property type="entry name" value="Transcription elongation factor, GreA/GreB, N-terminal domain"/>
    <property type="match status" value="1"/>
</dbReference>
<dbReference type="HAMAP" id="MF_00105">
    <property type="entry name" value="GreA_GreB"/>
    <property type="match status" value="1"/>
</dbReference>
<dbReference type="InterPro" id="IPR036953">
    <property type="entry name" value="GreA/GreB_C_sf"/>
</dbReference>
<dbReference type="InterPro" id="IPR018151">
    <property type="entry name" value="TF_GreA/GreB_CS"/>
</dbReference>
<dbReference type="InterPro" id="IPR006359">
    <property type="entry name" value="Tscrpt_elong_fac_GreA"/>
</dbReference>
<dbReference type="InterPro" id="IPR028624">
    <property type="entry name" value="Tscrpt_elong_fac_GreA/B"/>
</dbReference>
<dbReference type="InterPro" id="IPR001437">
    <property type="entry name" value="Tscrpt_elong_fac_GreA/B_C"/>
</dbReference>
<dbReference type="InterPro" id="IPR023459">
    <property type="entry name" value="Tscrpt_elong_fac_GreA/B_fam"/>
</dbReference>
<dbReference type="InterPro" id="IPR022691">
    <property type="entry name" value="Tscrpt_elong_fac_GreA/B_N"/>
</dbReference>
<dbReference type="InterPro" id="IPR036805">
    <property type="entry name" value="Tscrpt_elong_fac_GreA/B_N_sf"/>
</dbReference>
<dbReference type="NCBIfam" id="TIGR01462">
    <property type="entry name" value="greA"/>
    <property type="match status" value="1"/>
</dbReference>
<dbReference type="NCBIfam" id="NF001261">
    <property type="entry name" value="PRK00226.1-2"/>
    <property type="match status" value="1"/>
</dbReference>
<dbReference type="NCBIfam" id="NF001263">
    <property type="entry name" value="PRK00226.1-4"/>
    <property type="match status" value="1"/>
</dbReference>
<dbReference type="PANTHER" id="PTHR30437">
    <property type="entry name" value="TRANSCRIPTION ELONGATION FACTOR GREA"/>
    <property type="match status" value="1"/>
</dbReference>
<dbReference type="PANTHER" id="PTHR30437:SF4">
    <property type="entry name" value="TRANSCRIPTION ELONGATION FACTOR GREA"/>
    <property type="match status" value="1"/>
</dbReference>
<dbReference type="Pfam" id="PF01272">
    <property type="entry name" value="GreA_GreB"/>
    <property type="match status" value="1"/>
</dbReference>
<dbReference type="Pfam" id="PF03449">
    <property type="entry name" value="GreA_GreB_N"/>
    <property type="match status" value="1"/>
</dbReference>
<dbReference type="PIRSF" id="PIRSF006092">
    <property type="entry name" value="GreA_GreB"/>
    <property type="match status" value="1"/>
</dbReference>
<dbReference type="SUPFAM" id="SSF54534">
    <property type="entry name" value="FKBP-like"/>
    <property type="match status" value="1"/>
</dbReference>
<dbReference type="SUPFAM" id="SSF46557">
    <property type="entry name" value="GreA transcript cleavage protein, N-terminal domain"/>
    <property type="match status" value="1"/>
</dbReference>
<dbReference type="PROSITE" id="PS00829">
    <property type="entry name" value="GREAB_1"/>
    <property type="match status" value="1"/>
</dbReference>
<dbReference type="PROSITE" id="PS00830">
    <property type="entry name" value="GREAB_2"/>
    <property type="match status" value="1"/>
</dbReference>
<gene>
    <name evidence="1" type="primary">greA</name>
    <name type="ordered locus">SERP1174</name>
</gene>
<comment type="function">
    <text evidence="1">Necessary for efficient RNA polymerase transcription elongation past template-encoded arresting sites. The arresting sites in DNA have the property of trapping a certain fraction of elongating RNA polymerases that pass through, resulting in locked ternary complexes. Cleavage of the nascent transcript by cleavage factors such as GreA or GreB allows the resumption of elongation from the new 3'terminus. GreA releases sequences of 2 to 3 nucleotides.</text>
</comment>
<comment type="similarity">
    <text evidence="1">Belongs to the GreA/GreB family.</text>
</comment>
<proteinExistence type="inferred from homology"/>
<evidence type="ECO:0000255" key="1">
    <source>
        <dbReference type="HAMAP-Rule" id="MF_00105"/>
    </source>
</evidence>
<name>GREA_STAEQ</name>
<organism>
    <name type="scientific">Staphylococcus epidermidis (strain ATCC 35984 / DSM 28319 / BCRC 17069 / CCUG 31568 / BM 3577 / RP62A)</name>
    <dbReference type="NCBI Taxonomy" id="176279"/>
    <lineage>
        <taxon>Bacteria</taxon>
        <taxon>Bacillati</taxon>
        <taxon>Bacillota</taxon>
        <taxon>Bacilli</taxon>
        <taxon>Bacillales</taxon>
        <taxon>Staphylococcaceae</taxon>
        <taxon>Staphylococcus</taxon>
    </lineage>
</organism>